<proteinExistence type="inferred from homology"/>
<keyword id="KW-0963">Cytoplasm</keyword>
<keyword id="KW-0489">Methyltransferase</keyword>
<keyword id="KW-1185">Reference proteome</keyword>
<keyword id="KW-0698">rRNA processing</keyword>
<keyword id="KW-0949">S-adenosyl-L-methionine</keyword>
<keyword id="KW-0808">Transferase</keyword>
<comment type="function">
    <text evidence="1">Specifically methylates the N4 position of cytidine in position 1402 (C1402) of 16S rRNA.</text>
</comment>
<comment type="catalytic activity">
    <reaction evidence="1">
        <text>cytidine(1402) in 16S rRNA + S-adenosyl-L-methionine = N(4)-methylcytidine(1402) in 16S rRNA + S-adenosyl-L-homocysteine + H(+)</text>
        <dbReference type="Rhea" id="RHEA:42928"/>
        <dbReference type="Rhea" id="RHEA-COMP:10286"/>
        <dbReference type="Rhea" id="RHEA-COMP:10287"/>
        <dbReference type="ChEBI" id="CHEBI:15378"/>
        <dbReference type="ChEBI" id="CHEBI:57856"/>
        <dbReference type="ChEBI" id="CHEBI:59789"/>
        <dbReference type="ChEBI" id="CHEBI:74506"/>
        <dbReference type="ChEBI" id="CHEBI:82748"/>
        <dbReference type="EC" id="2.1.1.199"/>
    </reaction>
</comment>
<comment type="subcellular location">
    <subcellularLocation>
        <location evidence="1">Cytoplasm</location>
    </subcellularLocation>
</comment>
<comment type="similarity">
    <text evidence="1">Belongs to the methyltransferase superfamily. RsmH family.</text>
</comment>
<reference key="1">
    <citation type="journal article" date="2011" name="Stand. Genomic Sci.">
        <title>Complete genome sequence of Parvibaculum lavamentivorans type strain (DS-1(T)).</title>
        <authorList>
            <person name="Schleheck D."/>
            <person name="Weiss M."/>
            <person name="Pitluck S."/>
            <person name="Bruce D."/>
            <person name="Land M.L."/>
            <person name="Han S."/>
            <person name="Saunders E."/>
            <person name="Tapia R."/>
            <person name="Detter C."/>
            <person name="Brettin T."/>
            <person name="Han J."/>
            <person name="Woyke T."/>
            <person name="Goodwin L."/>
            <person name="Pennacchio L."/>
            <person name="Nolan M."/>
            <person name="Cook A.M."/>
            <person name="Kjelleberg S."/>
            <person name="Thomas T."/>
        </authorList>
    </citation>
    <scope>NUCLEOTIDE SEQUENCE [LARGE SCALE GENOMIC DNA]</scope>
    <source>
        <strain>DS-1 / DSM 13023 / NCIMB 13966</strain>
    </source>
</reference>
<sequence>MSDNGQNSASPHIPVMLADVLDVLKPRDGGVYVDGTFGAGGYTRAILGSADCAVLAIDRDPTAILRGRALATEFAGRLTLIEGRFGDMKRLVRELGHGTVDGVVLDIGVSSMQLDQAERGFSFQQDGPLDMRMGGEGPSAADVVNHFDEADLARIIAVYGEEKRARAVARAIVAARQTAELHRTLELADLVASVIHRKPQDRIHPATRTFQALRIFVNDELGELARGLSGAEDLLHEGGRLAVVAFHSLEDRIVKRFLTARTGRAGRANRYMPERDEVAPSFREIAHKAMKASEEEVEINVRARSAKLRAAERTAAPALPLDLAALGFRAVPTLDGSLA</sequence>
<accession>A7HVT9</accession>
<evidence type="ECO:0000255" key="1">
    <source>
        <dbReference type="HAMAP-Rule" id="MF_01007"/>
    </source>
</evidence>
<name>RSMH_PARL1</name>
<dbReference type="EC" id="2.1.1.199" evidence="1"/>
<dbReference type="EMBL" id="CP000774">
    <property type="protein sequence ID" value="ABS64022.1"/>
    <property type="molecule type" value="Genomic_DNA"/>
</dbReference>
<dbReference type="RefSeq" id="WP_012111331.1">
    <property type="nucleotide sequence ID" value="NC_009719.1"/>
</dbReference>
<dbReference type="SMR" id="A7HVT9"/>
<dbReference type="STRING" id="402881.Plav_2413"/>
<dbReference type="KEGG" id="pla:Plav_2413"/>
<dbReference type="eggNOG" id="COG0275">
    <property type="taxonomic scope" value="Bacteria"/>
</dbReference>
<dbReference type="HOGENOM" id="CLU_038422_1_1_5"/>
<dbReference type="OrthoDB" id="9806637at2"/>
<dbReference type="Proteomes" id="UP000006377">
    <property type="component" value="Chromosome"/>
</dbReference>
<dbReference type="GO" id="GO:0005737">
    <property type="term" value="C:cytoplasm"/>
    <property type="evidence" value="ECO:0007669"/>
    <property type="project" value="UniProtKB-SubCell"/>
</dbReference>
<dbReference type="GO" id="GO:0071424">
    <property type="term" value="F:rRNA (cytosine-N4-)-methyltransferase activity"/>
    <property type="evidence" value="ECO:0007669"/>
    <property type="project" value="UniProtKB-UniRule"/>
</dbReference>
<dbReference type="GO" id="GO:0070475">
    <property type="term" value="P:rRNA base methylation"/>
    <property type="evidence" value="ECO:0007669"/>
    <property type="project" value="UniProtKB-UniRule"/>
</dbReference>
<dbReference type="FunFam" id="1.10.150.170:FF:000003">
    <property type="entry name" value="Ribosomal RNA small subunit methyltransferase H"/>
    <property type="match status" value="1"/>
</dbReference>
<dbReference type="Gene3D" id="1.10.150.170">
    <property type="entry name" value="Putative methyltransferase TM0872, insert domain"/>
    <property type="match status" value="1"/>
</dbReference>
<dbReference type="Gene3D" id="3.40.50.150">
    <property type="entry name" value="Vaccinia Virus protein VP39"/>
    <property type="match status" value="1"/>
</dbReference>
<dbReference type="HAMAP" id="MF_01007">
    <property type="entry name" value="16SrRNA_methyltr_H"/>
    <property type="match status" value="1"/>
</dbReference>
<dbReference type="InterPro" id="IPR002903">
    <property type="entry name" value="RsmH"/>
</dbReference>
<dbReference type="InterPro" id="IPR023397">
    <property type="entry name" value="SAM-dep_MeTrfase_MraW_recog"/>
</dbReference>
<dbReference type="InterPro" id="IPR029063">
    <property type="entry name" value="SAM-dependent_MTases_sf"/>
</dbReference>
<dbReference type="NCBIfam" id="TIGR00006">
    <property type="entry name" value="16S rRNA (cytosine(1402)-N(4))-methyltransferase RsmH"/>
    <property type="match status" value="1"/>
</dbReference>
<dbReference type="PANTHER" id="PTHR11265:SF0">
    <property type="entry name" value="12S RRNA N4-METHYLCYTIDINE METHYLTRANSFERASE"/>
    <property type="match status" value="1"/>
</dbReference>
<dbReference type="PANTHER" id="PTHR11265">
    <property type="entry name" value="S-ADENOSYL-METHYLTRANSFERASE MRAW"/>
    <property type="match status" value="1"/>
</dbReference>
<dbReference type="Pfam" id="PF01795">
    <property type="entry name" value="Methyltransf_5"/>
    <property type="match status" value="1"/>
</dbReference>
<dbReference type="PIRSF" id="PIRSF004486">
    <property type="entry name" value="MraW"/>
    <property type="match status" value="1"/>
</dbReference>
<dbReference type="SUPFAM" id="SSF81799">
    <property type="entry name" value="Putative methyltransferase TM0872, insert domain"/>
    <property type="match status" value="1"/>
</dbReference>
<dbReference type="SUPFAM" id="SSF53335">
    <property type="entry name" value="S-adenosyl-L-methionine-dependent methyltransferases"/>
    <property type="match status" value="1"/>
</dbReference>
<protein>
    <recommendedName>
        <fullName evidence="1">Ribosomal RNA small subunit methyltransferase H</fullName>
        <ecNumber evidence="1">2.1.1.199</ecNumber>
    </recommendedName>
    <alternativeName>
        <fullName evidence="1">16S rRNA m(4)C1402 methyltransferase</fullName>
    </alternativeName>
    <alternativeName>
        <fullName evidence="1">rRNA (cytosine-N(4)-)-methyltransferase RsmH</fullName>
    </alternativeName>
</protein>
<organism>
    <name type="scientific">Parvibaculum lavamentivorans (strain DS-1 / DSM 13023 / NCIMB 13966)</name>
    <dbReference type="NCBI Taxonomy" id="402881"/>
    <lineage>
        <taxon>Bacteria</taxon>
        <taxon>Pseudomonadati</taxon>
        <taxon>Pseudomonadota</taxon>
        <taxon>Alphaproteobacteria</taxon>
        <taxon>Hyphomicrobiales</taxon>
        <taxon>Parvibaculaceae</taxon>
        <taxon>Parvibaculum</taxon>
    </lineage>
</organism>
<gene>
    <name evidence="1" type="primary">rsmH</name>
    <name type="synonym">mraW</name>
    <name type="ordered locus">Plav_2413</name>
</gene>
<feature type="chain" id="PRO_0000387021" description="Ribosomal RNA small subunit methyltransferase H">
    <location>
        <begin position="1"/>
        <end position="339"/>
    </location>
</feature>
<feature type="binding site" evidence="1">
    <location>
        <begin position="40"/>
        <end position="42"/>
    </location>
    <ligand>
        <name>S-adenosyl-L-methionine</name>
        <dbReference type="ChEBI" id="CHEBI:59789"/>
    </ligand>
</feature>
<feature type="binding site" evidence="1">
    <location>
        <position position="58"/>
    </location>
    <ligand>
        <name>S-adenosyl-L-methionine</name>
        <dbReference type="ChEBI" id="CHEBI:59789"/>
    </ligand>
</feature>
<feature type="binding site" evidence="1">
    <location>
        <position position="85"/>
    </location>
    <ligand>
        <name>S-adenosyl-L-methionine</name>
        <dbReference type="ChEBI" id="CHEBI:59789"/>
    </ligand>
</feature>
<feature type="binding site" evidence="1">
    <location>
        <position position="106"/>
    </location>
    <ligand>
        <name>S-adenosyl-L-methionine</name>
        <dbReference type="ChEBI" id="CHEBI:59789"/>
    </ligand>
</feature>
<feature type="binding site" evidence="1">
    <location>
        <position position="113"/>
    </location>
    <ligand>
        <name>S-adenosyl-L-methionine</name>
        <dbReference type="ChEBI" id="CHEBI:59789"/>
    </ligand>
</feature>